<sequence length="486" mass="53080">MSNNFKDDFEKNRQSIDTNSHQDHTEDVEKDQSELEHQDTIENTEQQFPPRNAQRRKRRRDLATNHNKQVHNESQTSEDNVQNEAGTIDDRQVESSHSTESQEPSHQDSTPQHEEGYYNKNAFAMDKSHPEPIEDNDKHETIKEAENNTEHSTVSDKSEAEQSQQPKPYFATGANQANTSKDKHDDVTVKQDKDESKDHHSGKKGAAIGAGTAGVAGAAGAMGVSKAKKHSNDAQNKSNSGKVNNSTEDKASEDKSKEHHNGKKGAAIGAGTAGLAGGAASNSASAASKPHASNNASQNNDEHDHHDRDKERKKGGMAKVLLPLIAAVLIIGALAIFGGMALNNHNNGTKENKIANTNKNNADESKDKDTSKDASKDKSKSTDSDKSKDDQDKATKDESDNDQNNANQANNQAQNNQNQQQANQNQQQQQQRQGGGQRHTVNGQENLYRIAIQYYGSGSPENVEKIRRANGLSGNNIRNGQQIVIP</sequence>
<accession>Q6GGT1</accession>
<feature type="initiator methionine" description="Removed" evidence="1">
    <location>
        <position position="1"/>
    </location>
</feature>
<feature type="chain" id="PRO_0000271734" description="Elastin-binding protein EbpS">
    <location>
        <begin position="2"/>
        <end position="486"/>
    </location>
</feature>
<feature type="topological domain" description="Extracellular" evidence="2">
    <location>
        <begin position="2"/>
        <end position="204"/>
    </location>
</feature>
<feature type="transmembrane region" description="Helical" evidence="2">
    <location>
        <begin position="205"/>
        <end position="225"/>
    </location>
</feature>
<feature type="topological domain" description="Cytoplasmic" evidence="2">
    <location>
        <begin position="226"/>
        <end position="319"/>
    </location>
</feature>
<feature type="transmembrane region" description="Helical" evidence="2">
    <location>
        <begin position="320"/>
        <end position="340"/>
    </location>
</feature>
<feature type="topological domain" description="Extracellular" evidence="2">
    <location>
        <begin position="341"/>
        <end position="486"/>
    </location>
</feature>
<feature type="domain" description="LysM" evidence="3">
    <location>
        <begin position="437"/>
        <end position="485"/>
    </location>
</feature>
<feature type="region of interest" description="Disordered" evidence="4">
    <location>
        <begin position="1"/>
        <end position="314"/>
    </location>
</feature>
<feature type="region of interest" description="Elastin-binding" evidence="1">
    <location>
        <begin position="14"/>
        <end position="34"/>
    </location>
</feature>
<feature type="region of interest" description="Disordered" evidence="4">
    <location>
        <begin position="351"/>
        <end position="440"/>
    </location>
</feature>
<feature type="compositionally biased region" description="Basic and acidic residues" evidence="4">
    <location>
        <begin position="1"/>
        <end position="40"/>
    </location>
</feature>
<feature type="compositionally biased region" description="Polar residues" evidence="4">
    <location>
        <begin position="64"/>
        <end position="85"/>
    </location>
</feature>
<feature type="compositionally biased region" description="Basic and acidic residues" evidence="4">
    <location>
        <begin position="103"/>
        <end position="117"/>
    </location>
</feature>
<feature type="compositionally biased region" description="Basic and acidic residues" evidence="4">
    <location>
        <begin position="126"/>
        <end position="160"/>
    </location>
</feature>
<feature type="compositionally biased region" description="Basic and acidic residues" evidence="4">
    <location>
        <begin position="180"/>
        <end position="199"/>
    </location>
</feature>
<feature type="compositionally biased region" description="Low complexity" evidence="4">
    <location>
        <begin position="204"/>
        <end position="225"/>
    </location>
</feature>
<feature type="compositionally biased region" description="Polar residues" evidence="4">
    <location>
        <begin position="233"/>
        <end position="246"/>
    </location>
</feature>
<feature type="compositionally biased region" description="Basic and acidic residues" evidence="4">
    <location>
        <begin position="247"/>
        <end position="259"/>
    </location>
</feature>
<feature type="compositionally biased region" description="Low complexity" evidence="4">
    <location>
        <begin position="278"/>
        <end position="297"/>
    </location>
</feature>
<feature type="compositionally biased region" description="Basic and acidic residues" evidence="4">
    <location>
        <begin position="300"/>
        <end position="314"/>
    </location>
</feature>
<feature type="compositionally biased region" description="Basic and acidic residues" evidence="4">
    <location>
        <begin position="361"/>
        <end position="398"/>
    </location>
</feature>
<feature type="compositionally biased region" description="Low complexity" evidence="4">
    <location>
        <begin position="403"/>
        <end position="431"/>
    </location>
</feature>
<comment type="function">
    <text evidence="1">Promotes binding of soluble elastin peptides and tropoelastin to S.aureus cells although it is not able to promote bacterial adherence to immobilized elastin and, therefore, is not a microbial surface component recognizing adhesive matrix molecule (MSCRAMM).</text>
</comment>
<comment type="subcellular location">
    <subcellularLocation>
        <location evidence="1">Cell membrane</location>
        <topology evidence="1">Multi-pass membrane protein</topology>
    </subcellularLocation>
</comment>
<comment type="domain">
    <text evidence="1">The elastin-binding domain is located between residues 13-33 at the surface-exposed N-terminus, whereas the C-terminus, containing the LysM peptidoglycan-binding domain, is not exposed on the surface of intact cells and presumably remains buried within the peptidoglycan. The presence of the TNSHQD sequence, corresponding to residues 18-23, is essential for EbpS activity but not sufficient, additional flanking amino acids in the amino- or carboxy-terminal are required for elastin recognition (By similarity).</text>
</comment>
<evidence type="ECO:0000250" key="1"/>
<evidence type="ECO:0000255" key="2"/>
<evidence type="ECO:0000255" key="3">
    <source>
        <dbReference type="PROSITE-ProRule" id="PRU01118"/>
    </source>
</evidence>
<evidence type="ECO:0000256" key="4">
    <source>
        <dbReference type="SAM" id="MobiDB-lite"/>
    </source>
</evidence>
<protein>
    <recommendedName>
        <fullName>Elastin-binding protein EbpS</fullName>
    </recommendedName>
</protein>
<keyword id="KW-1003">Cell membrane</keyword>
<keyword id="KW-0472">Membrane</keyword>
<keyword id="KW-0812">Transmembrane</keyword>
<keyword id="KW-1133">Transmembrane helix</keyword>
<gene>
    <name type="primary">ebpS</name>
    <name type="ordered locus">SAR1489</name>
</gene>
<name>EBPS_STAAR</name>
<organism>
    <name type="scientific">Staphylococcus aureus (strain MRSA252)</name>
    <dbReference type="NCBI Taxonomy" id="282458"/>
    <lineage>
        <taxon>Bacteria</taxon>
        <taxon>Bacillati</taxon>
        <taxon>Bacillota</taxon>
        <taxon>Bacilli</taxon>
        <taxon>Bacillales</taxon>
        <taxon>Staphylococcaceae</taxon>
        <taxon>Staphylococcus</taxon>
    </lineage>
</organism>
<dbReference type="EMBL" id="BX571856">
    <property type="protein sequence ID" value="CAG40487.1"/>
    <property type="molecule type" value="Genomic_DNA"/>
</dbReference>
<dbReference type="RefSeq" id="WP_000069298.1">
    <property type="nucleotide sequence ID" value="NC_002952.2"/>
</dbReference>
<dbReference type="SMR" id="Q6GGT1"/>
<dbReference type="KEGG" id="sar:SAR1489"/>
<dbReference type="HOGENOM" id="CLU_043950_0_0_9"/>
<dbReference type="PRO" id="PR:Q6GGT1"/>
<dbReference type="Proteomes" id="UP000000596">
    <property type="component" value="Chromosome"/>
</dbReference>
<dbReference type="GO" id="GO:0005886">
    <property type="term" value="C:plasma membrane"/>
    <property type="evidence" value="ECO:0007669"/>
    <property type="project" value="UniProtKB-SubCell"/>
</dbReference>
<dbReference type="CDD" id="cd00118">
    <property type="entry name" value="LysM"/>
    <property type="match status" value="1"/>
</dbReference>
<dbReference type="Gene3D" id="3.10.350.10">
    <property type="entry name" value="LysM domain"/>
    <property type="match status" value="1"/>
</dbReference>
<dbReference type="InterPro" id="IPR018392">
    <property type="entry name" value="LysM_dom"/>
</dbReference>
<dbReference type="InterPro" id="IPR036779">
    <property type="entry name" value="LysM_dom_sf"/>
</dbReference>
<dbReference type="NCBIfam" id="NF033598">
    <property type="entry name" value="elast_bind_EbpS"/>
    <property type="match status" value="1"/>
</dbReference>
<dbReference type="Pfam" id="PF01476">
    <property type="entry name" value="LysM"/>
    <property type="match status" value="1"/>
</dbReference>
<dbReference type="SMART" id="SM00257">
    <property type="entry name" value="LysM"/>
    <property type="match status" value="1"/>
</dbReference>
<dbReference type="SUPFAM" id="SSF54106">
    <property type="entry name" value="LysM domain"/>
    <property type="match status" value="1"/>
</dbReference>
<dbReference type="PROSITE" id="PS51782">
    <property type="entry name" value="LYSM"/>
    <property type="match status" value="1"/>
</dbReference>
<proteinExistence type="inferred from homology"/>
<reference key="1">
    <citation type="journal article" date="2004" name="Proc. Natl. Acad. Sci. U.S.A.">
        <title>Complete genomes of two clinical Staphylococcus aureus strains: evidence for the rapid evolution of virulence and drug resistance.</title>
        <authorList>
            <person name="Holden M.T.G."/>
            <person name="Feil E.J."/>
            <person name="Lindsay J.A."/>
            <person name="Peacock S.J."/>
            <person name="Day N.P.J."/>
            <person name="Enright M.C."/>
            <person name="Foster T.J."/>
            <person name="Moore C.E."/>
            <person name="Hurst L."/>
            <person name="Atkin R."/>
            <person name="Barron A."/>
            <person name="Bason N."/>
            <person name="Bentley S.D."/>
            <person name="Chillingworth C."/>
            <person name="Chillingworth T."/>
            <person name="Churcher C."/>
            <person name="Clark L."/>
            <person name="Corton C."/>
            <person name="Cronin A."/>
            <person name="Doggett J."/>
            <person name="Dowd L."/>
            <person name="Feltwell T."/>
            <person name="Hance Z."/>
            <person name="Harris B."/>
            <person name="Hauser H."/>
            <person name="Holroyd S."/>
            <person name="Jagels K."/>
            <person name="James K.D."/>
            <person name="Lennard N."/>
            <person name="Line A."/>
            <person name="Mayes R."/>
            <person name="Moule S."/>
            <person name="Mungall K."/>
            <person name="Ormond D."/>
            <person name="Quail M.A."/>
            <person name="Rabbinowitsch E."/>
            <person name="Rutherford K.M."/>
            <person name="Sanders M."/>
            <person name="Sharp S."/>
            <person name="Simmonds M."/>
            <person name="Stevens K."/>
            <person name="Whitehead S."/>
            <person name="Barrell B.G."/>
            <person name="Spratt B.G."/>
            <person name="Parkhill J."/>
        </authorList>
    </citation>
    <scope>NUCLEOTIDE SEQUENCE [LARGE SCALE GENOMIC DNA]</scope>
    <source>
        <strain>MRSA252</strain>
    </source>
</reference>